<proteinExistence type="inferred from homology"/>
<feature type="chain" id="PRO_1000071204" description="Imidazoleglycerol-phosphate dehydratase">
    <location>
        <begin position="1"/>
        <end position="193"/>
    </location>
</feature>
<name>HIS7_METS5</name>
<protein>
    <recommendedName>
        <fullName evidence="1">Imidazoleglycerol-phosphate dehydratase</fullName>
        <shortName evidence="1">IGPD</shortName>
        <ecNumber evidence="1">4.2.1.19</ecNumber>
    </recommendedName>
</protein>
<accession>A4YI33</accession>
<dbReference type="EC" id="4.2.1.19" evidence="1"/>
<dbReference type="EMBL" id="CP000682">
    <property type="protein sequence ID" value="ABP96085.1"/>
    <property type="molecule type" value="Genomic_DNA"/>
</dbReference>
<dbReference type="SMR" id="A4YI33"/>
<dbReference type="STRING" id="399549.Msed_1945"/>
<dbReference type="KEGG" id="mse:Msed_1945"/>
<dbReference type="eggNOG" id="arCOG04398">
    <property type="taxonomic scope" value="Archaea"/>
</dbReference>
<dbReference type="HOGENOM" id="CLU_044308_3_0_2"/>
<dbReference type="UniPathway" id="UPA00031">
    <property type="reaction ID" value="UER00011"/>
</dbReference>
<dbReference type="Proteomes" id="UP000000242">
    <property type="component" value="Chromosome"/>
</dbReference>
<dbReference type="GO" id="GO:0005737">
    <property type="term" value="C:cytoplasm"/>
    <property type="evidence" value="ECO:0007669"/>
    <property type="project" value="UniProtKB-SubCell"/>
</dbReference>
<dbReference type="GO" id="GO:0004424">
    <property type="term" value="F:imidazoleglycerol-phosphate dehydratase activity"/>
    <property type="evidence" value="ECO:0007669"/>
    <property type="project" value="UniProtKB-UniRule"/>
</dbReference>
<dbReference type="GO" id="GO:0000105">
    <property type="term" value="P:L-histidine biosynthetic process"/>
    <property type="evidence" value="ECO:0007669"/>
    <property type="project" value="UniProtKB-UniRule"/>
</dbReference>
<dbReference type="CDD" id="cd07914">
    <property type="entry name" value="IGPD"/>
    <property type="match status" value="1"/>
</dbReference>
<dbReference type="FunFam" id="3.30.230.40:FF:000001">
    <property type="entry name" value="Imidazoleglycerol-phosphate dehydratase HisB"/>
    <property type="match status" value="1"/>
</dbReference>
<dbReference type="FunFam" id="3.30.230.40:FF:000003">
    <property type="entry name" value="Imidazoleglycerol-phosphate dehydratase HisB"/>
    <property type="match status" value="1"/>
</dbReference>
<dbReference type="Gene3D" id="3.30.230.40">
    <property type="entry name" value="Imidazole glycerol phosphate dehydratase, domain 1"/>
    <property type="match status" value="2"/>
</dbReference>
<dbReference type="HAMAP" id="MF_00076">
    <property type="entry name" value="HisB"/>
    <property type="match status" value="1"/>
</dbReference>
<dbReference type="InterPro" id="IPR038494">
    <property type="entry name" value="IGPD_sf"/>
</dbReference>
<dbReference type="InterPro" id="IPR000807">
    <property type="entry name" value="ImidazoleglycerolP_deHydtase"/>
</dbReference>
<dbReference type="InterPro" id="IPR020565">
    <property type="entry name" value="ImidazoleglycerP_deHydtase_CS"/>
</dbReference>
<dbReference type="InterPro" id="IPR020568">
    <property type="entry name" value="Ribosomal_Su5_D2-typ_SF"/>
</dbReference>
<dbReference type="NCBIfam" id="NF002111">
    <property type="entry name" value="PRK00951.2-1"/>
    <property type="match status" value="1"/>
</dbReference>
<dbReference type="NCBIfam" id="NF002114">
    <property type="entry name" value="PRK00951.2-4"/>
    <property type="match status" value="1"/>
</dbReference>
<dbReference type="NCBIfam" id="NF010121">
    <property type="entry name" value="PRK13598.1"/>
    <property type="match status" value="1"/>
</dbReference>
<dbReference type="PANTHER" id="PTHR23133:SF2">
    <property type="entry name" value="IMIDAZOLEGLYCEROL-PHOSPHATE DEHYDRATASE"/>
    <property type="match status" value="1"/>
</dbReference>
<dbReference type="PANTHER" id="PTHR23133">
    <property type="entry name" value="IMIDAZOLEGLYCEROL-PHOSPHATE DEHYDRATASE HIS7"/>
    <property type="match status" value="1"/>
</dbReference>
<dbReference type="Pfam" id="PF00475">
    <property type="entry name" value="IGPD"/>
    <property type="match status" value="1"/>
</dbReference>
<dbReference type="SUPFAM" id="SSF54211">
    <property type="entry name" value="Ribosomal protein S5 domain 2-like"/>
    <property type="match status" value="2"/>
</dbReference>
<dbReference type="PROSITE" id="PS00954">
    <property type="entry name" value="IGP_DEHYDRATASE_1"/>
    <property type="match status" value="1"/>
</dbReference>
<dbReference type="PROSITE" id="PS00955">
    <property type="entry name" value="IGP_DEHYDRATASE_2"/>
    <property type="match status" value="1"/>
</dbReference>
<comment type="catalytic activity">
    <reaction evidence="1">
        <text>D-erythro-1-(imidazol-4-yl)glycerol 3-phosphate = 3-(imidazol-4-yl)-2-oxopropyl phosphate + H2O</text>
        <dbReference type="Rhea" id="RHEA:11040"/>
        <dbReference type="ChEBI" id="CHEBI:15377"/>
        <dbReference type="ChEBI" id="CHEBI:57766"/>
        <dbReference type="ChEBI" id="CHEBI:58278"/>
        <dbReference type="EC" id="4.2.1.19"/>
    </reaction>
</comment>
<comment type="pathway">
    <text evidence="1">Amino-acid biosynthesis; L-histidine biosynthesis; L-histidine from 5-phospho-alpha-D-ribose 1-diphosphate: step 6/9.</text>
</comment>
<comment type="subcellular location">
    <subcellularLocation>
        <location evidence="1">Cytoplasm</location>
    </subcellularLocation>
</comment>
<comment type="similarity">
    <text evidence="1">Belongs to the imidazoleglycerol-phosphate dehydratase family.</text>
</comment>
<keyword id="KW-0028">Amino-acid biosynthesis</keyword>
<keyword id="KW-0963">Cytoplasm</keyword>
<keyword id="KW-0368">Histidine biosynthesis</keyword>
<keyword id="KW-0456">Lyase</keyword>
<keyword id="KW-1185">Reference proteome</keyword>
<evidence type="ECO:0000255" key="1">
    <source>
        <dbReference type="HAMAP-Rule" id="MF_00076"/>
    </source>
</evidence>
<reference key="1">
    <citation type="journal article" date="2008" name="Appl. Environ. Microbiol.">
        <title>The genome sequence of the metal-mobilizing, extremely thermoacidophilic archaeon Metallosphaera sedula provides insights into bioleaching-associated metabolism.</title>
        <authorList>
            <person name="Auernik K.S."/>
            <person name="Maezato Y."/>
            <person name="Blum P.H."/>
            <person name="Kelly R.M."/>
        </authorList>
    </citation>
    <scope>NUCLEOTIDE SEQUENCE [LARGE SCALE GENOMIC DNA]</scope>
    <source>
        <strain>ATCC 51363 / DSM 5348 / JCM 9185 / NBRC 15509 / TH2</strain>
    </source>
</reference>
<gene>
    <name evidence="1" type="primary">hisB</name>
    <name type="ordered locus">Msed_1945</name>
</gene>
<sequence length="193" mass="21233">MSRYVEKVRETKETKVQVKLELDGEGKVEIRTPVPFFDHMLHSMLFYMKVNATILGEDKQGYDDHHIVEDVGITLGQAIKDALGDRRGIKRFSSAVIPMDEALVLVAVDVSGRGYASTNLDLKREKIGDLSTENVAHFFWSLATNAGITLHVRKLDGVNEHHIVEAAFKGVGLALGEACSIQGEGIRSTKGSL</sequence>
<organism>
    <name type="scientific">Metallosphaera sedula (strain ATCC 51363 / DSM 5348 / JCM 9185 / NBRC 15509 / TH2)</name>
    <dbReference type="NCBI Taxonomy" id="399549"/>
    <lineage>
        <taxon>Archaea</taxon>
        <taxon>Thermoproteota</taxon>
        <taxon>Thermoprotei</taxon>
        <taxon>Sulfolobales</taxon>
        <taxon>Sulfolobaceae</taxon>
        <taxon>Metallosphaera</taxon>
    </lineage>
</organism>